<dbReference type="EC" id="2.1.1.13"/>
<dbReference type="EMBL" id="X16584">
    <property type="protein sequence ID" value="CAA34601.1"/>
    <property type="molecule type" value="Genomic_DNA"/>
</dbReference>
<dbReference type="EMBL" id="J04975">
    <property type="protein sequence ID" value="AAA02995.1"/>
    <property type="molecule type" value="Unassigned_DNA"/>
</dbReference>
<dbReference type="EMBL" id="U00006">
    <property type="protein sequence ID" value="AAC43113.1"/>
    <property type="molecule type" value="Genomic_DNA"/>
</dbReference>
<dbReference type="EMBL" id="U00096">
    <property type="protein sequence ID" value="AAC76989.1"/>
    <property type="molecule type" value="Genomic_DNA"/>
</dbReference>
<dbReference type="EMBL" id="AP009048">
    <property type="protein sequence ID" value="BAE78021.1"/>
    <property type="molecule type" value="Genomic_DNA"/>
</dbReference>
<dbReference type="PIR" id="B65209">
    <property type="entry name" value="XYECMH"/>
</dbReference>
<dbReference type="RefSeq" id="NP_418443.1">
    <property type="nucleotide sequence ID" value="NC_000913.3"/>
</dbReference>
<dbReference type="RefSeq" id="WP_000096011.1">
    <property type="nucleotide sequence ID" value="NZ_SSZK01000049.1"/>
</dbReference>
<dbReference type="PDB" id="1BMT">
    <property type="method" value="X-ray"/>
    <property type="resolution" value="3.00 A"/>
    <property type="chains" value="A/B=651-896"/>
</dbReference>
<dbReference type="PDB" id="1K7Y">
    <property type="method" value="X-ray"/>
    <property type="resolution" value="3.00 A"/>
    <property type="chains" value="A=651-1227"/>
</dbReference>
<dbReference type="PDB" id="1K98">
    <property type="method" value="X-ray"/>
    <property type="resolution" value="3.75 A"/>
    <property type="chains" value="A=651-1227"/>
</dbReference>
<dbReference type="PDB" id="1MSK">
    <property type="method" value="X-ray"/>
    <property type="resolution" value="1.80 A"/>
    <property type="chains" value="A=897-1227"/>
</dbReference>
<dbReference type="PDB" id="3BUL">
    <property type="method" value="X-ray"/>
    <property type="resolution" value="2.30 A"/>
    <property type="chains" value="A=649-1227"/>
</dbReference>
<dbReference type="PDB" id="3IV9">
    <property type="method" value="X-ray"/>
    <property type="resolution" value="3.25 A"/>
    <property type="chains" value="A=649-1227"/>
</dbReference>
<dbReference type="PDB" id="3IVA">
    <property type="method" value="X-ray"/>
    <property type="resolution" value="2.70 A"/>
    <property type="chains" value="A=649-1227"/>
</dbReference>
<dbReference type="PDB" id="6BDY">
    <property type="method" value="X-ray"/>
    <property type="resolution" value="1.51 A"/>
    <property type="chains" value="A=897-1227"/>
</dbReference>
<dbReference type="PDB" id="6BM5">
    <property type="method" value="X-ray"/>
    <property type="resolution" value="1.50 A"/>
    <property type="chains" value="A=897-1227"/>
</dbReference>
<dbReference type="PDB" id="6BM6">
    <property type="method" value="X-ray"/>
    <property type="resolution" value="1.50 A"/>
    <property type="chains" value="A=897-1227"/>
</dbReference>
<dbReference type="PDBsum" id="1BMT"/>
<dbReference type="PDBsum" id="1K7Y"/>
<dbReference type="PDBsum" id="1K98"/>
<dbReference type="PDBsum" id="1MSK"/>
<dbReference type="PDBsum" id="3BUL"/>
<dbReference type="PDBsum" id="3IV9"/>
<dbReference type="PDBsum" id="3IVA"/>
<dbReference type="PDBsum" id="6BDY"/>
<dbReference type="PDBsum" id="6BM5"/>
<dbReference type="PDBsum" id="6BM6"/>
<dbReference type="SMR" id="P13009"/>
<dbReference type="BioGRID" id="4263452">
    <property type="interactions" value="53"/>
</dbReference>
<dbReference type="FunCoup" id="P13009">
    <property type="interactions" value="709"/>
</dbReference>
<dbReference type="IntAct" id="P13009">
    <property type="interactions" value="13"/>
</dbReference>
<dbReference type="STRING" id="511145.b4019"/>
<dbReference type="jPOST" id="P13009"/>
<dbReference type="PaxDb" id="511145-b4019"/>
<dbReference type="EnsemblBacteria" id="AAC76989">
    <property type="protein sequence ID" value="AAC76989"/>
    <property type="gene ID" value="b4019"/>
</dbReference>
<dbReference type="GeneID" id="75204159"/>
<dbReference type="GeneID" id="948522"/>
<dbReference type="KEGG" id="ecj:JW3979"/>
<dbReference type="KEGG" id="eco:b4019"/>
<dbReference type="PATRIC" id="fig|511145.12.peg.4132"/>
<dbReference type="EchoBASE" id="EB0582"/>
<dbReference type="eggNOG" id="COG0646">
    <property type="taxonomic scope" value="Bacteria"/>
</dbReference>
<dbReference type="eggNOG" id="COG1410">
    <property type="taxonomic scope" value="Bacteria"/>
</dbReference>
<dbReference type="HOGENOM" id="CLU_004914_2_0_6"/>
<dbReference type="InParanoid" id="P13009"/>
<dbReference type="OMA" id="ADCIAMS"/>
<dbReference type="OrthoDB" id="9803687at2"/>
<dbReference type="PhylomeDB" id="P13009"/>
<dbReference type="BioCyc" id="EcoCyc:HOMOCYSMETB12-MONOMER"/>
<dbReference type="BioCyc" id="MetaCyc:HOMOCYSMETB12-MONOMER"/>
<dbReference type="BRENDA" id="2.1.1.13">
    <property type="organism ID" value="2026"/>
</dbReference>
<dbReference type="UniPathway" id="UPA00051">
    <property type="reaction ID" value="UER00081"/>
</dbReference>
<dbReference type="EvolutionaryTrace" id="P13009"/>
<dbReference type="PRO" id="PR:P13009"/>
<dbReference type="Proteomes" id="UP000000625">
    <property type="component" value="Chromosome"/>
</dbReference>
<dbReference type="GO" id="GO:0005737">
    <property type="term" value="C:cytoplasm"/>
    <property type="evidence" value="ECO:0000314"/>
    <property type="project" value="EcoliWiki"/>
</dbReference>
<dbReference type="GO" id="GO:0005829">
    <property type="term" value="C:cytosol"/>
    <property type="evidence" value="ECO:0000314"/>
    <property type="project" value="EcoCyc"/>
</dbReference>
<dbReference type="GO" id="GO:0031419">
    <property type="term" value="F:cobalamin binding"/>
    <property type="evidence" value="ECO:0000314"/>
    <property type="project" value="BHF-UCL"/>
</dbReference>
<dbReference type="GO" id="GO:0008705">
    <property type="term" value="F:methionine synthase activity"/>
    <property type="evidence" value="ECO:0000314"/>
    <property type="project" value="BHF-UCL"/>
</dbReference>
<dbReference type="GO" id="GO:0008270">
    <property type="term" value="F:zinc ion binding"/>
    <property type="evidence" value="ECO:0000314"/>
    <property type="project" value="EcoCyc"/>
</dbReference>
<dbReference type="GO" id="GO:0050667">
    <property type="term" value="P:homocysteine metabolic process"/>
    <property type="evidence" value="ECO:0000314"/>
    <property type="project" value="BHF-UCL"/>
</dbReference>
<dbReference type="GO" id="GO:0009086">
    <property type="term" value="P:methionine biosynthetic process"/>
    <property type="evidence" value="ECO:0000314"/>
    <property type="project" value="BHF-UCL"/>
</dbReference>
<dbReference type="GO" id="GO:0032259">
    <property type="term" value="P:methylation"/>
    <property type="evidence" value="ECO:0007669"/>
    <property type="project" value="UniProtKB-KW"/>
</dbReference>
<dbReference type="GO" id="GO:0035999">
    <property type="term" value="P:tetrahydrofolate interconversion"/>
    <property type="evidence" value="ECO:0000314"/>
    <property type="project" value="BHF-UCL"/>
</dbReference>
<dbReference type="GO" id="GO:0046653">
    <property type="term" value="P:tetrahydrofolate metabolic process"/>
    <property type="evidence" value="ECO:0000318"/>
    <property type="project" value="GO_Central"/>
</dbReference>
<dbReference type="CDD" id="cd02069">
    <property type="entry name" value="methionine_synthase_B12_BD"/>
    <property type="match status" value="1"/>
</dbReference>
<dbReference type="CDD" id="cd00740">
    <property type="entry name" value="MeTr"/>
    <property type="match status" value="1"/>
</dbReference>
<dbReference type="FunFam" id="1.10.1240.10:FF:000001">
    <property type="entry name" value="Methionine synthase"/>
    <property type="match status" value="1"/>
</dbReference>
<dbReference type="FunFam" id="3.20.20.20:FF:000002">
    <property type="entry name" value="Methionine synthase"/>
    <property type="match status" value="1"/>
</dbReference>
<dbReference type="FunFam" id="3.20.20.330:FF:000001">
    <property type="entry name" value="Methionine synthase"/>
    <property type="match status" value="1"/>
</dbReference>
<dbReference type="FunFam" id="3.40.50.280:FF:000001">
    <property type="entry name" value="Methionine synthase"/>
    <property type="match status" value="1"/>
</dbReference>
<dbReference type="Gene3D" id="3.40.50.280">
    <property type="entry name" value="Cobalamin-binding domain"/>
    <property type="match status" value="1"/>
</dbReference>
<dbReference type="Gene3D" id="1.10.288.10">
    <property type="entry name" value="Cobalamin-dependent Methionine Synthase, domain 2"/>
    <property type="match status" value="1"/>
</dbReference>
<dbReference type="Gene3D" id="3.20.20.20">
    <property type="entry name" value="Dihydropteroate synthase-like"/>
    <property type="match status" value="1"/>
</dbReference>
<dbReference type="Gene3D" id="3.20.20.330">
    <property type="entry name" value="Homocysteine-binding-like domain"/>
    <property type="match status" value="1"/>
</dbReference>
<dbReference type="Gene3D" id="1.10.1240.10">
    <property type="entry name" value="Methionine synthase domain"/>
    <property type="match status" value="1"/>
</dbReference>
<dbReference type="Gene3D" id="3.10.196.10">
    <property type="entry name" value="Vitamin B12-dependent methionine synthase, activation domain"/>
    <property type="match status" value="1"/>
</dbReference>
<dbReference type="InterPro" id="IPR003759">
    <property type="entry name" value="Cbl-bd_cap"/>
</dbReference>
<dbReference type="InterPro" id="IPR006158">
    <property type="entry name" value="Cobalamin-bd"/>
</dbReference>
<dbReference type="InterPro" id="IPR036724">
    <property type="entry name" value="Cobalamin-bd_sf"/>
</dbReference>
<dbReference type="InterPro" id="IPR011005">
    <property type="entry name" value="Dihydropteroate_synth-like_sf"/>
</dbReference>
<dbReference type="InterPro" id="IPR003726">
    <property type="entry name" value="HCY_dom"/>
</dbReference>
<dbReference type="InterPro" id="IPR036589">
    <property type="entry name" value="HCY_dom_sf"/>
</dbReference>
<dbReference type="InterPro" id="IPR050554">
    <property type="entry name" value="Met_Synthase/Corrinoid"/>
</dbReference>
<dbReference type="InterPro" id="IPR033706">
    <property type="entry name" value="Met_synthase_B12-bd"/>
</dbReference>
<dbReference type="InterPro" id="IPR011822">
    <property type="entry name" value="MetH"/>
</dbReference>
<dbReference type="InterPro" id="IPR036594">
    <property type="entry name" value="Meth_synthase_dom"/>
</dbReference>
<dbReference type="InterPro" id="IPR000489">
    <property type="entry name" value="Pterin-binding_dom"/>
</dbReference>
<dbReference type="InterPro" id="IPR004223">
    <property type="entry name" value="VitB12-dep_Met_synth_activ_dom"/>
</dbReference>
<dbReference type="InterPro" id="IPR037010">
    <property type="entry name" value="VitB12-dep_Met_synth_activ_sf"/>
</dbReference>
<dbReference type="NCBIfam" id="TIGR02082">
    <property type="entry name" value="metH"/>
    <property type="match status" value="1"/>
</dbReference>
<dbReference type="NCBIfam" id="NF007024">
    <property type="entry name" value="PRK09490.1"/>
    <property type="match status" value="1"/>
</dbReference>
<dbReference type="PANTHER" id="PTHR45833">
    <property type="entry name" value="METHIONINE SYNTHASE"/>
    <property type="match status" value="1"/>
</dbReference>
<dbReference type="PANTHER" id="PTHR45833:SF1">
    <property type="entry name" value="METHIONINE SYNTHASE"/>
    <property type="match status" value="1"/>
</dbReference>
<dbReference type="Pfam" id="PF02310">
    <property type="entry name" value="B12-binding"/>
    <property type="match status" value="1"/>
</dbReference>
<dbReference type="Pfam" id="PF02607">
    <property type="entry name" value="B12-binding_2"/>
    <property type="match status" value="1"/>
</dbReference>
<dbReference type="Pfam" id="PF02965">
    <property type="entry name" value="Met_synt_B12"/>
    <property type="match status" value="1"/>
</dbReference>
<dbReference type="Pfam" id="PF00809">
    <property type="entry name" value="Pterin_bind"/>
    <property type="match status" value="1"/>
</dbReference>
<dbReference type="Pfam" id="PF02574">
    <property type="entry name" value="S-methyl_trans"/>
    <property type="match status" value="1"/>
</dbReference>
<dbReference type="PIRSF" id="PIRSF000381">
    <property type="entry name" value="MetH"/>
    <property type="match status" value="1"/>
</dbReference>
<dbReference type="SMART" id="SM01018">
    <property type="entry name" value="B12-binding_2"/>
    <property type="match status" value="1"/>
</dbReference>
<dbReference type="SUPFAM" id="SSF52242">
    <property type="entry name" value="Cobalamin (vitamin B12)-binding domain"/>
    <property type="match status" value="1"/>
</dbReference>
<dbReference type="SUPFAM" id="SSF51717">
    <property type="entry name" value="Dihydropteroate synthetase-like"/>
    <property type="match status" value="1"/>
</dbReference>
<dbReference type="SUPFAM" id="SSF82282">
    <property type="entry name" value="Homocysteine S-methyltransferase"/>
    <property type="match status" value="1"/>
</dbReference>
<dbReference type="SUPFAM" id="SSF56507">
    <property type="entry name" value="Methionine synthase activation domain-like"/>
    <property type="match status" value="1"/>
</dbReference>
<dbReference type="SUPFAM" id="SSF47644">
    <property type="entry name" value="Methionine synthase domain"/>
    <property type="match status" value="1"/>
</dbReference>
<dbReference type="PROSITE" id="PS50974">
    <property type="entry name" value="ADOMET_ACTIVATION"/>
    <property type="match status" value="1"/>
</dbReference>
<dbReference type="PROSITE" id="PS51332">
    <property type="entry name" value="B12_BINDING"/>
    <property type="match status" value="1"/>
</dbReference>
<dbReference type="PROSITE" id="PS51337">
    <property type="entry name" value="B12_BINDING_NTER"/>
    <property type="match status" value="1"/>
</dbReference>
<dbReference type="PROSITE" id="PS50970">
    <property type="entry name" value="HCY"/>
    <property type="match status" value="1"/>
</dbReference>
<dbReference type="PROSITE" id="PS50972">
    <property type="entry name" value="PTERIN_BINDING"/>
    <property type="match status" value="1"/>
</dbReference>
<comment type="function">
    <text evidence="7 9">Catalyzes the transfer of a methyl group from methyl-cobalamin to homocysteine, yielding enzyme-bound cob(I)alamin and methionine. Subsequently, remethylates the cofactor using methyltetrahydrofolate.</text>
</comment>
<comment type="catalytic activity">
    <reaction evidence="7 9">
        <text>(6S)-5-methyl-5,6,7,8-tetrahydrofolate + L-homocysteine = (6S)-5,6,7,8-tetrahydrofolate + L-methionine</text>
        <dbReference type="Rhea" id="RHEA:11172"/>
        <dbReference type="ChEBI" id="CHEBI:18608"/>
        <dbReference type="ChEBI" id="CHEBI:57453"/>
        <dbReference type="ChEBI" id="CHEBI:57844"/>
        <dbReference type="ChEBI" id="CHEBI:58199"/>
        <dbReference type="EC" id="2.1.1.13"/>
    </reaction>
</comment>
<comment type="cofactor">
    <cofactor evidence="6">
        <name>methylcob(III)alamin</name>
        <dbReference type="ChEBI" id="CHEBI:28115"/>
    </cofactor>
</comment>
<comment type="cofactor">
    <cofactor evidence="10">
        <name>Zn(2+)</name>
        <dbReference type="ChEBI" id="CHEBI:29105"/>
    </cofactor>
    <text evidence="10">Binds 1 zinc ion per subunit.</text>
</comment>
<comment type="pathway">
    <text>Amino-acid biosynthesis; L-methionine biosynthesis via de novo pathway; L-methionine from L-homocysteine (MetH route): step 1/1.</text>
</comment>
<comment type="domain">
    <text evidence="9">Modular enzyme with four functionally distinct domains. The isolated Hcy-binding domain catalyzes methyl transfer from free methylcobalamin to homocysteine. The Hcy-binding domain in association with the pterin-binding domain catalyzes the methylation of cob(I)alamin by methyltetrahydrofolate and the methylation of homocysteine. The B12-binding domain binds the cofactor. The AdoMet activation domain binds S-adenosyl-L-methionine. Under aerobic conditions cob(I)alamin can be converted to inactive cob(II)alamin. Reductive methylation by S-adenosyl-L-methionine and flavodoxin regenerates methylcobalamin.</text>
</comment>
<comment type="miscellaneous">
    <text>L-homocysteine is bound via the zinc atom.</text>
</comment>
<comment type="similarity">
    <text evidence="11">Belongs to the vitamin-B12 dependent methionine synthase family.</text>
</comment>
<keyword id="KW-0002">3D-structure</keyword>
<keyword id="KW-0028">Amino-acid biosynthesis</keyword>
<keyword id="KW-0846">Cobalamin</keyword>
<keyword id="KW-0170">Cobalt</keyword>
<keyword id="KW-0903">Direct protein sequencing</keyword>
<keyword id="KW-0479">Metal-binding</keyword>
<keyword id="KW-0486">Methionine biosynthesis</keyword>
<keyword id="KW-0489">Methyltransferase</keyword>
<keyword id="KW-1185">Reference proteome</keyword>
<keyword id="KW-0677">Repeat</keyword>
<keyword id="KW-0949">S-adenosyl-L-methionine</keyword>
<keyword id="KW-0808">Transferase</keyword>
<keyword id="KW-0862">Zinc</keyword>
<accession>P13009</accession>
<accession>Q2M6T5</accession>
<proteinExistence type="evidence at protein level"/>
<reference key="1">
    <citation type="journal article" date="1990" name="Gene">
        <title>Nucleotide sequence of the metH gene of Escherichia coli K-12 and comparison with that of Salmonella typhimurium LT2.</title>
        <authorList>
            <person name="Old I.G."/>
            <person name="Margarita D."/>
            <person name="Glass R.E."/>
            <person name="Saint-Girons I."/>
        </authorList>
    </citation>
    <scope>NUCLEOTIDE SEQUENCE [GENOMIC DNA]</scope>
    <source>
        <strain>K12</strain>
    </source>
</reference>
<reference key="2">
    <citation type="journal article" date="1989" name="J. Biol. Chem.">
        <title>Cloning and sequence analysis of the Escherichia coli metH gene encoding cobalamin-dependent methionine synthase and isolation of a tryptic fragment containing the cobalamin-binding domain.</title>
        <authorList>
            <person name="Banerjee R.V."/>
            <person name="Johnston N.L."/>
            <person name="Sobeski J.K."/>
            <person name="Datta P."/>
            <person name="Matthews R.G."/>
        </authorList>
    </citation>
    <scope>NUCLEOTIDE SEQUENCE [GENOMIC DNA]</scope>
    <scope>PARTIAL PROTEIN SEQUENCE</scope>
    <source>
        <strain>K12</strain>
    </source>
</reference>
<reference key="3">
    <citation type="journal article" date="1993" name="Biochemistry">
        <title>Electrospray mass spectrometric analysis of the domains of a large enzyme: observation of the occupied cobalamin-binding domain and redefinition of the carboxyl terminus of methionine synthase.</title>
        <authorList>
            <person name="Drummond J.T."/>
            <person name="Loo R.R."/>
            <person name="Matthews R.G."/>
        </authorList>
    </citation>
    <scope>SEQUENCE REVISION</scope>
</reference>
<reference key="4">
    <citation type="journal article" date="1993" name="Nucleic Acids Res.">
        <title>Analysis of the Escherichia coli genome. IV. DNA sequence of the region from 89.2 to 92.8 minutes.</title>
        <authorList>
            <person name="Blattner F.R."/>
            <person name="Burland V.D."/>
            <person name="Plunkett G. III"/>
            <person name="Sofia H.J."/>
            <person name="Daniels D.L."/>
        </authorList>
    </citation>
    <scope>NUCLEOTIDE SEQUENCE [LARGE SCALE GENOMIC DNA]</scope>
    <source>
        <strain>K12 / MG1655 / ATCC 47076</strain>
    </source>
</reference>
<reference key="5">
    <citation type="journal article" date="1997" name="Science">
        <title>The complete genome sequence of Escherichia coli K-12.</title>
        <authorList>
            <person name="Blattner F.R."/>
            <person name="Plunkett G. III"/>
            <person name="Bloch C.A."/>
            <person name="Perna N.T."/>
            <person name="Burland V."/>
            <person name="Riley M."/>
            <person name="Collado-Vides J."/>
            <person name="Glasner J.D."/>
            <person name="Rode C.K."/>
            <person name="Mayhew G.F."/>
            <person name="Gregor J."/>
            <person name="Davis N.W."/>
            <person name="Kirkpatrick H.A."/>
            <person name="Goeden M.A."/>
            <person name="Rose D.J."/>
            <person name="Mau B."/>
            <person name="Shao Y."/>
        </authorList>
    </citation>
    <scope>NUCLEOTIDE SEQUENCE [LARGE SCALE GENOMIC DNA]</scope>
    <source>
        <strain>K12 / MG1655 / ATCC 47076</strain>
    </source>
</reference>
<reference key="6">
    <citation type="journal article" date="2006" name="Mol. Syst. Biol.">
        <title>Highly accurate genome sequences of Escherichia coli K-12 strains MG1655 and W3110.</title>
        <authorList>
            <person name="Hayashi K."/>
            <person name="Morooka N."/>
            <person name="Yamamoto Y."/>
            <person name="Fujita K."/>
            <person name="Isono K."/>
            <person name="Choi S."/>
            <person name="Ohtsubo E."/>
            <person name="Baba T."/>
            <person name="Wanner B.L."/>
            <person name="Mori H."/>
            <person name="Horiuchi T."/>
        </authorList>
    </citation>
    <scope>NUCLEOTIDE SEQUENCE [LARGE SCALE GENOMIC DNA]</scope>
    <source>
        <strain>K12 / W3110 / ATCC 27325 / DSM 5911</strain>
    </source>
</reference>
<reference key="7">
    <citation type="journal article" date="1997" name="Biochemistry">
        <title>Cobalamin-dependent methionine synthase is a modular protein with distinct regions for binding homocysteine, methyltetrahydrofolate, cobalamin, and adenosylmethionine.</title>
        <authorList>
            <person name="Goulding C.W."/>
            <person name="Postigo D."/>
            <person name="Matthews R.G."/>
        </authorList>
    </citation>
    <scope>PROTEIN SEQUENCE OF 2-7</scope>
    <scope>FUNCTION</scope>
    <scope>CATALYTIC ACTIVITY</scope>
    <scope>DOMAIN</scope>
    <scope>MUTAGENESIS OF CYS-310 AND CYS-311</scope>
    <source>
        <strain>K12</strain>
    </source>
</reference>
<reference key="8">
    <citation type="journal article" date="1992" name="J. Mol. Biol.">
        <title>Crystallization and preliminary X-ray diffraction studies of the cobalamin-binding domain of methionine synthase from Escherichia coli.</title>
        <authorList>
            <person name="Luschinsky C.L."/>
            <person name="Drummond J.T."/>
            <person name="Matthews R.G."/>
            <person name="Ludwig M.L."/>
        </authorList>
    </citation>
    <scope>CRYSTALLIZATION</scope>
</reference>
<reference key="9">
    <citation type="journal article" date="1996" name="Biochemistry">
        <title>Mutations in the B12-binding region of methionine synthase: how the protein controls methylcobalamin reactivity.</title>
        <authorList>
            <person name="Jarrett J.T."/>
            <person name="Amaratunga M."/>
            <person name="Drennan C.L."/>
            <person name="Scholten J.D."/>
            <person name="Sands R.H."/>
            <person name="Ludwig M.L."/>
            <person name="Matthews R.G."/>
        </authorList>
    </citation>
    <scope>FUNCTION</scope>
    <scope>CATALYTIC ACTIVITY</scope>
    <scope>MUTAGENESIS OF ASP-757; HIS-759 AND SER-810</scope>
    <source>
        <strain>K12</strain>
    </source>
</reference>
<reference key="10">
    <citation type="journal article" date="1997" name="Biochemistry">
        <title>Cobalamin-dependent methionine synthase from Escherichia coli: involvement of zinc in homocysteine activation.</title>
        <authorList>
            <person name="Goulding C.W."/>
            <person name="Matthews R.G."/>
        </authorList>
    </citation>
    <scope>ZINC BINDING SITES</scope>
    <source>
        <strain>K12</strain>
    </source>
</reference>
<reference key="11">
    <citation type="journal article" date="1997" name="Electrophoresis">
        <title>Escherichia coli proteome analysis using the gene-protein database.</title>
        <authorList>
            <person name="VanBogelen R.A."/>
            <person name="Abshire K.Z."/>
            <person name="Moldover B."/>
            <person name="Olson E.R."/>
            <person name="Neidhardt F.C."/>
        </authorList>
    </citation>
    <scope>IDENTIFICATION BY 2D-GEL</scope>
</reference>
<reference key="12">
    <citation type="journal article" date="2001" name="Biochemistry">
        <title>Characterization of the zinc sites in cobalamin-independent and cobalamin-dependent methionine synthase using zinc and selenium X-ray absorption spectroscopy.</title>
        <authorList>
            <person name="Peariso K."/>
            <person name="Zhou Z.S."/>
            <person name="Smith A.E."/>
            <person name="Matthews R.G."/>
            <person name="Penner-Hahn J.E."/>
        </authorList>
    </citation>
    <scope>ZINC BINDING SITES</scope>
    <scope>ROLE OF ZINC IN SUBSTRATE BINDING</scope>
    <source>
        <strain>K12</strain>
    </source>
</reference>
<reference key="13">
    <citation type="journal article" date="2001" name="Acc. Chem. Res.">
        <title>Cobalamin-dependent methyltransferases.</title>
        <authorList>
            <person name="Matthews R.G."/>
        </authorList>
    </citation>
    <scope>REVIEW</scope>
</reference>
<reference evidence="12" key="14">
    <citation type="journal article" date="1994" name="Science">
        <title>How a protein binds B12: a 3.0 A X-ray structure of B12-binding domains of methionine synthase.</title>
        <authorList>
            <person name="Drennan C.L."/>
            <person name="Huang S."/>
            <person name="Drummond J.T."/>
            <person name="Matthews R.G."/>
            <person name="Ludwig M.L."/>
        </authorList>
    </citation>
    <scope>X-RAY CRYSTALLOGRAPHY (3.0 ANGSTROMS) OF 651-896 IN COMPLEX WITH COBALAMIN</scope>
</reference>
<reference evidence="15" key="15">
    <citation type="journal article" date="1996" name="Structure">
        <title>The structure of the C-terminal domain of methionine synthase: presenting S-adenosylmethionine for reductive methylation of B12.</title>
        <authorList>
            <person name="Dixon M.M."/>
            <person name="Huang S."/>
            <person name="Matthews R.G."/>
            <person name="Ludwig M.L."/>
        </authorList>
    </citation>
    <scope>X-RAY CRYSTALLOGRAPHY (1.8 ANGSTROMS) OF 897-1227 IN COMPLEX WITH S-ADENOSYL-L-METHIONINE</scope>
    <source>
        <strain>K12</strain>
    </source>
</reference>
<reference evidence="13 14" key="16">
    <citation type="journal article" date="2002" name="Nat. Struct. Biol.">
        <title>Domain alternation switches B(12)-dependent methionine synthase to the activation conformation.</title>
        <authorList>
            <person name="Bandarian V."/>
            <person name="Pattridge K.A."/>
            <person name="Lennon B.W."/>
            <person name="Huddler D.P."/>
            <person name="Matthews R.G."/>
            <person name="Ludwig M.L."/>
        </authorList>
    </citation>
    <scope>X-RAY CRYSTALLOGRAPHY (3.0 ANGSTROMS) OF 651-1227 OF WILD-TYPE AND MUTANT GLY-759 IN COMPLEX WITH COBALAMIN</scope>
    <source>
        <strain>K12</strain>
    </source>
</reference>
<protein>
    <recommendedName>
        <fullName>Methionine synthase</fullName>
        <ecNumber>2.1.1.13</ecNumber>
    </recommendedName>
    <alternativeName>
        <fullName>5-methyltetrahydrofolate--homocysteine methyltransferase</fullName>
    </alternativeName>
    <alternativeName>
        <fullName>Methionine synthase, vitamin-B12-dependent</fullName>
        <shortName>MS</shortName>
    </alternativeName>
</protein>
<evidence type="ECO:0000255" key="1">
    <source>
        <dbReference type="PROSITE-ProRule" id="PRU00333"/>
    </source>
</evidence>
<evidence type="ECO:0000255" key="2">
    <source>
        <dbReference type="PROSITE-ProRule" id="PRU00334"/>
    </source>
</evidence>
<evidence type="ECO:0000255" key="3">
    <source>
        <dbReference type="PROSITE-ProRule" id="PRU00346"/>
    </source>
</evidence>
<evidence type="ECO:0000255" key="4">
    <source>
        <dbReference type="PROSITE-ProRule" id="PRU00666"/>
    </source>
</evidence>
<evidence type="ECO:0000255" key="5">
    <source>
        <dbReference type="PROSITE-ProRule" id="PRU00667"/>
    </source>
</evidence>
<evidence type="ECO:0000269" key="6">
    <source>
    </source>
</evidence>
<evidence type="ECO:0000269" key="7">
    <source>
    </source>
</evidence>
<evidence type="ECO:0000269" key="8">
    <source>
    </source>
</evidence>
<evidence type="ECO:0000269" key="9">
    <source>
    </source>
</evidence>
<evidence type="ECO:0000269" key="10">
    <source>
    </source>
</evidence>
<evidence type="ECO:0000305" key="11"/>
<evidence type="ECO:0007744" key="12">
    <source>
        <dbReference type="PDB" id="1BMT"/>
    </source>
</evidence>
<evidence type="ECO:0007744" key="13">
    <source>
        <dbReference type="PDB" id="1K7Y"/>
    </source>
</evidence>
<evidence type="ECO:0007744" key="14">
    <source>
        <dbReference type="PDB" id="1K98"/>
    </source>
</evidence>
<evidence type="ECO:0007744" key="15">
    <source>
        <dbReference type="PDB" id="1MSK"/>
    </source>
</evidence>
<evidence type="ECO:0007829" key="16">
    <source>
        <dbReference type="PDB" id="1K7Y"/>
    </source>
</evidence>
<evidence type="ECO:0007829" key="17">
    <source>
        <dbReference type="PDB" id="3BUL"/>
    </source>
</evidence>
<evidence type="ECO:0007829" key="18">
    <source>
        <dbReference type="PDB" id="3IV9"/>
    </source>
</evidence>
<evidence type="ECO:0007829" key="19">
    <source>
        <dbReference type="PDB" id="6BDY"/>
    </source>
</evidence>
<evidence type="ECO:0007829" key="20">
    <source>
        <dbReference type="PDB" id="6BM5"/>
    </source>
</evidence>
<sequence length="1227" mass="135997">MSSKVEQLRAQLNERILVLDGGMGTMIQSYRLNEADFRGERFADWPCDLKGNNDLLVLSKPEVIAAIHNAYFEAGADIIETNTFNSTTIAMADYQMESLSAEINFAAAKLARACADEWTARTPEKPRYVAGVLGPTNRTASISPDVNDPAFRNITFDGLVAAYRESTKALVEGGADLILIETVFDTLNAKAAVFAVKTEFEALGVELPIMISGTITDASGRTLSGQTTEAFYNSLRHAEALTFGLNCALGPDELRQYVQELSRIAECYVTAHPNAGLPNAFGEYDLDADTMAKQIREWAQAGFLNIVGGCCGTTPQHIAAMSRAVEGLAPRKLPEIPVACRLSGLEPLNIGEDSLFVNVGERTNVTGSAKFKRLIKEEKYSEALDVARQQVENGAQIIDINMDEGMLDAEAAMVRFLNLIAGEPDIARVPIMIDSSKWDVIEKGLKCIQGKGIVNSISMKEGVDAFIHHAKLLRRYGAAVVVMAFDEQGQADTRARKIEICRRAYKILTEEVGFPPEDIIFDPNIFAVATGIEEHNNYAQDFIGACEDIKRELPHALISGGVSNVSFSFRGNDPVREAIHAVFLYYAIRNGMDMGIVNAGQLAIYDDLPAELRDAVEDVILNRRDDGTERLLELAEKYRGSKTDDTANAQQAEWRSWEVNKRLEYSLVKGITEFIEQDTEEARQQATRPIEVIEGPLMDGMNVVGDLFGEGKMFLPQVVKSARVMKQAVAYLEPFIEASKEQGKTNGKMVIATVKGDVHDIGKNIVGVVLQCNNYEIVDLGVMVPAEKILRTAKEVNADLIGLSGLITPSLDEMVNVAKEMERQGFTIPLLIGGATTSKAHTAVKIEQNYSGPTVYVQNASRTVGVVAALLSDTQRDDFVARTRKEYETVRIQHGRKKPRTPPVTLEAARDNDFAFDWQAYTPPVAHRLGVQEVEASIETLRNYIDWTPFFMTWSLAGKYPRILEDEVVGVEAQRLFKDANDMLDKLSAEKTLNPRGVVGLFPANRVGDDIEIYRDETRTHVINVSHHLRQQTEKTGFANYCLADFVAPKLSGKADYIGAFAVTGGLEEDALADAFEAQHDDYNKIMVKALADRLAEAFAEYLHERVRKVYWGYAPNENLSNEELIRENYQGIRPAPGYPACPEHTEKATIWELLEVEKHTGMKLTESFAMWPGASVSGWYFSHPDSKYYAVAQIQRDQVEDYARRKGMSVTEVERWLAPNLGYDAD</sequence>
<name>METH_ECOLI</name>
<feature type="initiator methionine" description="Removed" evidence="9">
    <location>
        <position position="1"/>
    </location>
</feature>
<feature type="chain" id="PRO_0000204532" description="Methionine synthase">
    <location>
        <begin position="2"/>
        <end position="1227"/>
    </location>
</feature>
<feature type="domain" description="Hcy-binding" evidence="1">
    <location>
        <begin position="2"/>
        <end position="325"/>
    </location>
</feature>
<feature type="domain" description="Pterin-binding" evidence="2">
    <location>
        <begin position="356"/>
        <end position="617"/>
    </location>
</feature>
<feature type="domain" description="B12-binding N-terminal" evidence="5">
    <location>
        <begin position="650"/>
        <end position="744"/>
    </location>
</feature>
<feature type="domain" description="B12-binding" evidence="4">
    <location>
        <begin position="746"/>
        <end position="881"/>
    </location>
</feature>
<feature type="domain" description="AdoMet activation" evidence="3">
    <location>
        <begin position="897"/>
        <end position="1227"/>
    </location>
</feature>
<feature type="binding site" evidence="10">
    <location>
        <position position="247"/>
    </location>
    <ligand>
        <name>Zn(2+)</name>
        <dbReference type="ChEBI" id="CHEBI:29105"/>
    </ligand>
</feature>
<feature type="binding site" evidence="10">
    <location>
        <position position="310"/>
    </location>
    <ligand>
        <name>Zn(2+)</name>
        <dbReference type="ChEBI" id="CHEBI:29105"/>
    </ligand>
</feature>
<feature type="binding site" evidence="10">
    <location>
        <position position="311"/>
    </location>
    <ligand>
        <name>Zn(2+)</name>
        <dbReference type="ChEBI" id="CHEBI:29105"/>
    </ligand>
</feature>
<feature type="binding site" evidence="6 12">
    <location>
        <position position="694"/>
    </location>
    <ligand>
        <name>methylcob(III)alamin</name>
        <dbReference type="ChEBI" id="CHEBI:28115"/>
    </ligand>
</feature>
<feature type="binding site" evidence="6 12">
    <location>
        <begin position="756"/>
        <end position="760"/>
    </location>
    <ligand>
        <name>methylcob(III)alamin</name>
        <dbReference type="ChEBI" id="CHEBI:28115"/>
    </ligand>
</feature>
<feature type="binding site" description="axial binding residue" evidence="6 12">
    <location>
        <position position="759"/>
    </location>
    <ligand>
        <name>methylcob(III)alamin</name>
        <dbReference type="ChEBI" id="CHEBI:28115"/>
    </ligand>
    <ligandPart>
        <name>Co</name>
        <dbReference type="ChEBI" id="CHEBI:27638"/>
    </ligandPart>
</feature>
<feature type="binding site" evidence="6 12">
    <location>
        <position position="804"/>
    </location>
    <ligand>
        <name>methylcob(III)alamin</name>
        <dbReference type="ChEBI" id="CHEBI:28115"/>
    </ligand>
</feature>
<feature type="binding site" evidence="6 12">
    <location>
        <position position="808"/>
    </location>
    <ligand>
        <name>methylcob(III)alamin</name>
        <dbReference type="ChEBI" id="CHEBI:28115"/>
    </ligand>
</feature>
<feature type="binding site" evidence="6 12">
    <location>
        <position position="860"/>
    </location>
    <ligand>
        <name>methylcob(III)alamin</name>
        <dbReference type="ChEBI" id="CHEBI:28115"/>
    </ligand>
</feature>
<feature type="binding site" evidence="8">
    <location>
        <position position="946"/>
    </location>
    <ligand>
        <name>S-adenosyl-L-methionine</name>
        <dbReference type="ChEBI" id="CHEBI:59789"/>
    </ligand>
</feature>
<feature type="binding site" evidence="8">
    <location>
        <position position="1134"/>
    </location>
    <ligand>
        <name>S-adenosyl-L-methionine</name>
        <dbReference type="ChEBI" id="CHEBI:59789"/>
    </ligand>
</feature>
<feature type="binding site" evidence="8">
    <location>
        <begin position="1189"/>
        <end position="1190"/>
    </location>
    <ligand>
        <name>S-adenosyl-L-methionine</name>
        <dbReference type="ChEBI" id="CHEBI:59789"/>
    </ligand>
</feature>
<feature type="mutagenesis site" description="Loss of zinc binding. Loss of catalytic activity." evidence="9">
    <original>C</original>
    <variation>A</variation>
    <variation>S</variation>
    <location>
        <position position="310"/>
    </location>
</feature>
<feature type="mutagenesis site" description="Loss of zinc binding. Loss of catalytic activity." evidence="9">
    <original>C</original>
    <variation>A</variation>
    <variation>S</variation>
    <location>
        <position position="311"/>
    </location>
</feature>
<feature type="mutagenesis site" description="Decreases activity by about 70%." evidence="7">
    <original>D</original>
    <variation>E</variation>
    <location>
        <position position="757"/>
    </location>
</feature>
<feature type="mutagenesis site" description="Decreases activity by about 45%." evidence="7">
    <original>D</original>
    <variation>N</variation>
    <location>
        <position position="757"/>
    </location>
</feature>
<feature type="mutagenesis site" description="Loss of catalytic activity." evidence="7">
    <original>H</original>
    <variation>G</variation>
    <location>
        <position position="759"/>
    </location>
</feature>
<feature type="mutagenesis site" description="Decreases activity by about 40%." evidence="7">
    <original>S</original>
    <variation>A</variation>
    <location>
        <position position="810"/>
    </location>
</feature>
<feature type="sequence conflict" description="In Ref. 1 and 2." evidence="11" ref="1 2">
    <original>A</original>
    <variation>R</variation>
    <location>
        <position position="113"/>
    </location>
</feature>
<feature type="sequence conflict" description="In Ref. 1 and 2." evidence="11" ref="1 2">
    <original>S</original>
    <variation>T</variation>
    <location>
        <position position="641"/>
    </location>
</feature>
<feature type="sequence conflict" description="In Ref. 1; CAA34601." evidence="11" ref="1">
    <original>QH</original>
    <variation>HD</variation>
    <location>
        <begin position="1079"/>
        <end position="1080"/>
    </location>
</feature>
<feature type="sequence conflict" description="In Ref. 1; CAA34601." evidence="11" ref="1">
    <original>IQRDQVEDYARRKGMSVTEVERWLAPNLGYDAD</original>
    <variation>TSARSG</variation>
    <location>
        <begin position="1195"/>
        <end position="1227"/>
    </location>
</feature>
<feature type="helix" evidence="17">
    <location>
        <begin position="653"/>
        <end position="656"/>
    </location>
</feature>
<feature type="helix" evidence="17">
    <location>
        <begin position="659"/>
        <end position="669"/>
    </location>
</feature>
<feature type="helix" evidence="17">
    <location>
        <begin position="675"/>
        <end position="685"/>
    </location>
</feature>
<feature type="strand" evidence="17">
    <location>
        <begin position="686"/>
        <end position="688"/>
    </location>
</feature>
<feature type="helix" evidence="17">
    <location>
        <begin position="691"/>
        <end position="694"/>
    </location>
</feature>
<feature type="helix" evidence="17">
    <location>
        <begin position="696"/>
        <end position="710"/>
    </location>
</feature>
<feature type="helix" evidence="17">
    <location>
        <begin position="715"/>
        <end position="737"/>
    </location>
</feature>
<feature type="strand" evidence="16">
    <location>
        <begin position="738"/>
        <end position="741"/>
    </location>
</feature>
<feature type="strand" evidence="17">
    <location>
        <begin position="748"/>
        <end position="754"/>
    </location>
</feature>
<feature type="helix" evidence="17">
    <location>
        <begin position="761"/>
        <end position="771"/>
    </location>
</feature>
<feature type="turn" evidence="17">
    <location>
        <begin position="772"/>
        <end position="774"/>
    </location>
</feature>
<feature type="strand" evidence="17">
    <location>
        <begin position="776"/>
        <end position="779"/>
    </location>
</feature>
<feature type="strand" evidence="17">
    <location>
        <begin position="782"/>
        <end position="784"/>
    </location>
</feature>
<feature type="helix" evidence="17">
    <location>
        <begin position="786"/>
        <end position="796"/>
    </location>
</feature>
<feature type="strand" evidence="17">
    <location>
        <begin position="799"/>
        <end position="804"/>
    </location>
</feature>
<feature type="helix" evidence="17">
    <location>
        <begin position="809"/>
        <end position="823"/>
    </location>
</feature>
<feature type="strand" evidence="17">
    <location>
        <begin position="830"/>
        <end position="834"/>
    </location>
</feature>
<feature type="strand" evidence="18">
    <location>
        <begin position="835"/>
        <end position="837"/>
    </location>
</feature>
<feature type="helix" evidence="17">
    <location>
        <begin position="839"/>
        <end position="845"/>
    </location>
</feature>
<feature type="helix" evidence="17">
    <location>
        <begin position="847"/>
        <end position="849"/>
    </location>
</feature>
<feature type="strand" evidence="17">
    <location>
        <begin position="854"/>
        <end position="856"/>
    </location>
</feature>
<feature type="helix" evidence="17">
    <location>
        <begin position="860"/>
        <end position="870"/>
    </location>
</feature>
<feature type="turn" evidence="17">
    <location>
        <begin position="873"/>
        <end position="875"/>
    </location>
</feature>
<feature type="helix" evidence="17">
    <location>
        <begin position="876"/>
        <end position="893"/>
    </location>
</feature>
<feature type="helix" evidence="20">
    <location>
        <begin position="906"/>
        <end position="911"/>
    </location>
</feature>
<feature type="helix" evidence="20">
    <location>
        <begin position="918"/>
        <end position="920"/>
    </location>
</feature>
<feature type="strand" evidence="20">
    <location>
        <begin position="930"/>
        <end position="935"/>
    </location>
</feature>
<feature type="helix" evidence="20">
    <location>
        <begin position="938"/>
        <end position="942"/>
    </location>
</feature>
<feature type="helix" evidence="20">
    <location>
        <begin position="948"/>
        <end position="953"/>
    </location>
</feature>
<feature type="helix" evidence="20">
    <location>
        <begin position="962"/>
        <end position="965"/>
    </location>
</feature>
<feature type="turn" evidence="20">
    <location>
        <begin position="967"/>
        <end position="969"/>
    </location>
</feature>
<feature type="helix" evidence="20">
    <location>
        <begin position="970"/>
        <end position="990"/>
    </location>
</feature>
<feature type="strand" evidence="20">
    <location>
        <begin position="996"/>
        <end position="1007"/>
    </location>
</feature>
<feature type="strand" evidence="20">
    <location>
        <begin position="1010"/>
        <end position="1016"/>
    </location>
</feature>
<feature type="strand" evidence="20">
    <location>
        <begin position="1021"/>
        <end position="1027"/>
    </location>
</feature>
<feature type="strand" evidence="20">
    <location>
        <begin position="1036"/>
        <end position="1038"/>
    </location>
</feature>
<feature type="helix" evidence="20">
    <location>
        <begin position="1043"/>
        <end position="1046"/>
    </location>
</feature>
<feature type="helix" evidence="20">
    <location>
        <begin position="1050"/>
        <end position="1052"/>
    </location>
</feature>
<feature type="strand" evidence="20">
    <location>
        <begin position="1056"/>
        <end position="1065"/>
    </location>
</feature>
<feature type="helix" evidence="20">
    <location>
        <begin position="1069"/>
        <end position="1078"/>
    </location>
</feature>
<feature type="helix" evidence="20">
    <location>
        <begin position="1082"/>
        <end position="1109"/>
    </location>
</feature>
<feature type="helix" evidence="20">
    <location>
        <begin position="1122"/>
        <end position="1126"/>
    </location>
</feature>
<feature type="strand" evidence="20">
    <location>
        <begin position="1130"/>
        <end position="1133"/>
    </location>
</feature>
<feature type="helix" evidence="20">
    <location>
        <begin position="1145"/>
        <end position="1147"/>
    </location>
</feature>
<feature type="helix" evidence="20">
    <location>
        <begin position="1148"/>
        <end position="1154"/>
    </location>
</feature>
<feature type="helix" evidence="20">
    <location>
        <begin position="1157"/>
        <end position="1161"/>
    </location>
</feature>
<feature type="strand" evidence="18">
    <location>
        <begin position="1167"/>
        <end position="1169"/>
    </location>
</feature>
<feature type="strand" evidence="20">
    <location>
        <begin position="1171"/>
        <end position="1182"/>
    </location>
</feature>
<feature type="helix" evidence="20">
    <location>
        <begin position="1197"/>
        <end position="1207"/>
    </location>
</feature>
<feature type="helix" evidence="20">
    <location>
        <begin position="1211"/>
        <end position="1217"/>
    </location>
</feature>
<feature type="helix" evidence="20">
    <location>
        <begin position="1219"/>
        <end position="1221"/>
    </location>
</feature>
<feature type="strand" evidence="19">
    <location>
        <begin position="1222"/>
        <end position="1224"/>
    </location>
</feature>
<organism>
    <name type="scientific">Escherichia coli (strain K12)</name>
    <dbReference type="NCBI Taxonomy" id="83333"/>
    <lineage>
        <taxon>Bacteria</taxon>
        <taxon>Pseudomonadati</taxon>
        <taxon>Pseudomonadota</taxon>
        <taxon>Gammaproteobacteria</taxon>
        <taxon>Enterobacterales</taxon>
        <taxon>Enterobacteriaceae</taxon>
        <taxon>Escherichia</taxon>
    </lineage>
</organism>
<gene>
    <name type="primary">metH</name>
    <name type="ordered locus">b4019</name>
    <name type="ordered locus">JW3979</name>
</gene>